<accession>B3EGF3</accession>
<protein>
    <recommendedName>
        <fullName evidence="1">Co-chaperonin GroES</fullName>
    </recommendedName>
    <alternativeName>
        <fullName evidence="1">10 kDa chaperonin</fullName>
    </alternativeName>
    <alternativeName>
        <fullName evidence="1">Chaperonin-10</fullName>
        <shortName evidence="1">Cpn10</shortName>
    </alternativeName>
</protein>
<evidence type="ECO:0000255" key="1">
    <source>
        <dbReference type="HAMAP-Rule" id="MF_00580"/>
    </source>
</evidence>
<proteinExistence type="inferred from homology"/>
<comment type="function">
    <text evidence="1">Together with the chaperonin GroEL, plays an essential role in assisting protein folding. The GroEL-GroES system forms a nano-cage that allows encapsulation of the non-native substrate proteins and provides a physical environment optimized to promote and accelerate protein folding. GroES binds to the apical surface of the GroEL ring, thereby capping the opening of the GroEL channel.</text>
</comment>
<comment type="subunit">
    <text evidence="1">Heptamer of 7 subunits arranged in a ring. Interacts with the chaperonin GroEL.</text>
</comment>
<comment type="subcellular location">
    <subcellularLocation>
        <location evidence="1">Cytoplasm</location>
    </subcellularLocation>
</comment>
<comment type="similarity">
    <text evidence="1">Belongs to the GroES chaperonin family.</text>
</comment>
<feature type="chain" id="PRO_1000129634" description="Co-chaperonin GroES">
    <location>
        <begin position="1"/>
        <end position="95"/>
    </location>
</feature>
<gene>
    <name evidence="1" type="primary">groES</name>
    <name evidence="1" type="synonym">groS</name>
    <name type="ordered locus">Clim_0497</name>
</gene>
<reference key="1">
    <citation type="submission" date="2008-05" db="EMBL/GenBank/DDBJ databases">
        <title>Complete sequence of Chlorobium limicola DSM 245.</title>
        <authorList>
            <consortium name="US DOE Joint Genome Institute"/>
            <person name="Lucas S."/>
            <person name="Copeland A."/>
            <person name="Lapidus A."/>
            <person name="Glavina del Rio T."/>
            <person name="Dalin E."/>
            <person name="Tice H."/>
            <person name="Bruce D."/>
            <person name="Goodwin L."/>
            <person name="Pitluck S."/>
            <person name="Schmutz J."/>
            <person name="Larimer F."/>
            <person name="Land M."/>
            <person name="Hauser L."/>
            <person name="Kyrpides N."/>
            <person name="Ovchinnikova G."/>
            <person name="Zhao F."/>
            <person name="Li T."/>
            <person name="Liu Z."/>
            <person name="Overmann J."/>
            <person name="Bryant D.A."/>
            <person name="Richardson P."/>
        </authorList>
    </citation>
    <scope>NUCLEOTIDE SEQUENCE [LARGE SCALE GENOMIC DNA]</scope>
    <source>
        <strain>DSM 245 / NBRC 103803 / 6330</strain>
    </source>
</reference>
<keyword id="KW-0143">Chaperone</keyword>
<keyword id="KW-0963">Cytoplasm</keyword>
<organism>
    <name type="scientific">Chlorobium limicola (strain DSM 245 / NBRC 103803 / 6330)</name>
    <dbReference type="NCBI Taxonomy" id="290315"/>
    <lineage>
        <taxon>Bacteria</taxon>
        <taxon>Pseudomonadati</taxon>
        <taxon>Chlorobiota</taxon>
        <taxon>Chlorobiia</taxon>
        <taxon>Chlorobiales</taxon>
        <taxon>Chlorobiaceae</taxon>
        <taxon>Chlorobium/Pelodictyon group</taxon>
        <taxon>Chlorobium</taxon>
    </lineage>
</organism>
<name>CH10_CHLL2</name>
<dbReference type="EMBL" id="CP001097">
    <property type="protein sequence ID" value="ACD89590.1"/>
    <property type="molecule type" value="Genomic_DNA"/>
</dbReference>
<dbReference type="RefSeq" id="WP_012465471.1">
    <property type="nucleotide sequence ID" value="NC_010803.1"/>
</dbReference>
<dbReference type="SMR" id="B3EGF3"/>
<dbReference type="STRING" id="290315.Clim_0497"/>
<dbReference type="KEGG" id="cli:Clim_0497"/>
<dbReference type="eggNOG" id="COG0234">
    <property type="taxonomic scope" value="Bacteria"/>
</dbReference>
<dbReference type="HOGENOM" id="CLU_132825_2_0_10"/>
<dbReference type="OrthoDB" id="9806791at2"/>
<dbReference type="Proteomes" id="UP000008841">
    <property type="component" value="Chromosome"/>
</dbReference>
<dbReference type="GO" id="GO:0005737">
    <property type="term" value="C:cytoplasm"/>
    <property type="evidence" value="ECO:0007669"/>
    <property type="project" value="UniProtKB-SubCell"/>
</dbReference>
<dbReference type="GO" id="GO:0005524">
    <property type="term" value="F:ATP binding"/>
    <property type="evidence" value="ECO:0007669"/>
    <property type="project" value="InterPro"/>
</dbReference>
<dbReference type="GO" id="GO:0046872">
    <property type="term" value="F:metal ion binding"/>
    <property type="evidence" value="ECO:0007669"/>
    <property type="project" value="TreeGrafter"/>
</dbReference>
<dbReference type="GO" id="GO:0044183">
    <property type="term" value="F:protein folding chaperone"/>
    <property type="evidence" value="ECO:0007669"/>
    <property type="project" value="InterPro"/>
</dbReference>
<dbReference type="GO" id="GO:0051087">
    <property type="term" value="F:protein-folding chaperone binding"/>
    <property type="evidence" value="ECO:0007669"/>
    <property type="project" value="TreeGrafter"/>
</dbReference>
<dbReference type="GO" id="GO:0051082">
    <property type="term" value="F:unfolded protein binding"/>
    <property type="evidence" value="ECO:0007669"/>
    <property type="project" value="TreeGrafter"/>
</dbReference>
<dbReference type="GO" id="GO:0051085">
    <property type="term" value="P:chaperone cofactor-dependent protein refolding"/>
    <property type="evidence" value="ECO:0007669"/>
    <property type="project" value="TreeGrafter"/>
</dbReference>
<dbReference type="CDD" id="cd00320">
    <property type="entry name" value="cpn10"/>
    <property type="match status" value="1"/>
</dbReference>
<dbReference type="FunFam" id="2.30.33.40:FF:000001">
    <property type="entry name" value="10 kDa chaperonin"/>
    <property type="match status" value="1"/>
</dbReference>
<dbReference type="Gene3D" id="2.30.33.40">
    <property type="entry name" value="GroES chaperonin"/>
    <property type="match status" value="1"/>
</dbReference>
<dbReference type="HAMAP" id="MF_00580">
    <property type="entry name" value="CH10"/>
    <property type="match status" value="1"/>
</dbReference>
<dbReference type="InterPro" id="IPR020818">
    <property type="entry name" value="Chaperonin_GroES"/>
</dbReference>
<dbReference type="InterPro" id="IPR037124">
    <property type="entry name" value="Chaperonin_GroES_sf"/>
</dbReference>
<dbReference type="InterPro" id="IPR018369">
    <property type="entry name" value="Chaprnonin_Cpn10_CS"/>
</dbReference>
<dbReference type="InterPro" id="IPR011032">
    <property type="entry name" value="GroES-like_sf"/>
</dbReference>
<dbReference type="NCBIfam" id="NF001527">
    <property type="entry name" value="PRK00364.1-2"/>
    <property type="match status" value="1"/>
</dbReference>
<dbReference type="NCBIfam" id="NF001531">
    <property type="entry name" value="PRK00364.2-2"/>
    <property type="match status" value="1"/>
</dbReference>
<dbReference type="NCBIfam" id="NF001533">
    <property type="entry name" value="PRK00364.2-4"/>
    <property type="match status" value="1"/>
</dbReference>
<dbReference type="NCBIfam" id="NF001534">
    <property type="entry name" value="PRK00364.2-5"/>
    <property type="match status" value="1"/>
</dbReference>
<dbReference type="PANTHER" id="PTHR10772">
    <property type="entry name" value="10 KDA HEAT SHOCK PROTEIN"/>
    <property type="match status" value="1"/>
</dbReference>
<dbReference type="PANTHER" id="PTHR10772:SF58">
    <property type="entry name" value="CO-CHAPERONIN GROES"/>
    <property type="match status" value="1"/>
</dbReference>
<dbReference type="Pfam" id="PF00166">
    <property type="entry name" value="Cpn10"/>
    <property type="match status" value="1"/>
</dbReference>
<dbReference type="PRINTS" id="PR00297">
    <property type="entry name" value="CHAPERONIN10"/>
</dbReference>
<dbReference type="SMART" id="SM00883">
    <property type="entry name" value="Cpn10"/>
    <property type="match status" value="1"/>
</dbReference>
<dbReference type="SUPFAM" id="SSF50129">
    <property type="entry name" value="GroES-like"/>
    <property type="match status" value="1"/>
</dbReference>
<dbReference type="PROSITE" id="PS00681">
    <property type="entry name" value="CHAPERONINS_CPN10"/>
    <property type="match status" value="1"/>
</dbReference>
<sequence length="95" mass="10295">MNLKPLADRVIVKPAPAEEKTKGGLFIPDTGKEKPQYGEVVAVGPGKVADNGQLLDMQVTVGKKVLYGKYSGTEVNVEGEDYLIMRESDIFAILD</sequence>